<feature type="chain" id="PRO_0000061376" description="Cytochrome b">
    <location>
        <begin position="1"/>
        <end position="396"/>
    </location>
</feature>
<feature type="transmembrane region" description="Helical" evidence="2">
    <location>
        <begin position="37"/>
        <end position="57"/>
    </location>
</feature>
<feature type="transmembrane region" description="Helical" evidence="2">
    <location>
        <begin position="81"/>
        <end position="102"/>
    </location>
</feature>
<feature type="transmembrane region" description="Helical" evidence="2">
    <location>
        <begin position="117"/>
        <end position="137"/>
    </location>
</feature>
<feature type="transmembrane region" description="Helical" evidence="2">
    <location>
        <begin position="182"/>
        <end position="202"/>
    </location>
</feature>
<feature type="transmembrane region" description="Helical" evidence="2">
    <location>
        <begin position="230"/>
        <end position="250"/>
    </location>
</feature>
<feature type="transmembrane region" description="Helical" evidence="2">
    <location>
        <begin position="292"/>
        <end position="312"/>
    </location>
</feature>
<feature type="transmembrane region" description="Helical" evidence="2">
    <location>
        <begin position="324"/>
        <end position="344"/>
    </location>
</feature>
<feature type="transmembrane region" description="Helical" evidence="2">
    <location>
        <begin position="351"/>
        <end position="371"/>
    </location>
</feature>
<feature type="binding site" description="axial binding residue" evidence="2">
    <location>
        <position position="87"/>
    </location>
    <ligand>
        <name>heme b</name>
        <dbReference type="ChEBI" id="CHEBI:60344"/>
        <label>b562</label>
    </ligand>
    <ligandPart>
        <name>Fe</name>
        <dbReference type="ChEBI" id="CHEBI:18248"/>
    </ligandPart>
</feature>
<feature type="binding site" description="axial binding residue" evidence="2">
    <location>
        <position position="101"/>
    </location>
    <ligand>
        <name>heme b</name>
        <dbReference type="ChEBI" id="CHEBI:60344"/>
        <label>b566</label>
    </ligand>
    <ligandPart>
        <name>Fe</name>
        <dbReference type="ChEBI" id="CHEBI:18248"/>
    </ligandPart>
</feature>
<feature type="binding site" description="axial binding residue" evidence="2">
    <location>
        <position position="186"/>
    </location>
    <ligand>
        <name>heme b</name>
        <dbReference type="ChEBI" id="CHEBI:60344"/>
        <label>b562</label>
    </ligand>
    <ligandPart>
        <name>Fe</name>
        <dbReference type="ChEBI" id="CHEBI:18248"/>
    </ligandPart>
</feature>
<feature type="binding site" description="axial binding residue" evidence="2">
    <location>
        <position position="200"/>
    </location>
    <ligand>
        <name>heme b</name>
        <dbReference type="ChEBI" id="CHEBI:60344"/>
        <label>b566</label>
    </ligand>
    <ligandPart>
        <name>Fe</name>
        <dbReference type="ChEBI" id="CHEBI:18248"/>
    </ligandPart>
</feature>
<feature type="binding site" evidence="2">
    <location>
        <position position="205"/>
    </location>
    <ligand>
        <name>a ubiquinone</name>
        <dbReference type="ChEBI" id="CHEBI:16389"/>
    </ligand>
</feature>
<reference key="1">
    <citation type="journal article" date="1995" name="Genetics">
        <title>Complete sequence of a sea lamprey (Petromyzon marinus) mitochondrial genome: early establishment of the vertebrate genome organization.</title>
        <authorList>
            <person name="Lee W.J."/>
            <person name="Kocher T.D."/>
        </authorList>
    </citation>
    <scope>NUCLEOTIDE SEQUENCE [GENOMIC DNA]</scope>
</reference>
<gene>
    <name type="primary">mt-cyb</name>
    <name type="synonym">cob</name>
    <name type="synonym">cytb</name>
    <name type="synonym">mtcyb</name>
</gene>
<organism>
    <name type="scientific">Petromyzon marinus</name>
    <name type="common">Sea lamprey</name>
    <dbReference type="NCBI Taxonomy" id="7757"/>
    <lineage>
        <taxon>Eukaryota</taxon>
        <taxon>Metazoa</taxon>
        <taxon>Chordata</taxon>
        <taxon>Craniata</taxon>
        <taxon>Vertebrata</taxon>
        <taxon>Cyclostomata</taxon>
        <taxon>Hyperoartia</taxon>
        <taxon>Petromyzontiformes</taxon>
        <taxon>Petromyzontidae</taxon>
        <taxon>Petromyzon</taxon>
    </lineage>
</organism>
<accession>Q35534</accession>
<geneLocation type="mitochondrion"/>
<proteinExistence type="inferred from homology"/>
<dbReference type="EMBL" id="U11880">
    <property type="protein sequence ID" value="AAB08737.1"/>
    <property type="molecule type" value="Genomic_DNA"/>
</dbReference>
<dbReference type="PIR" id="S54999">
    <property type="entry name" value="S54999"/>
</dbReference>
<dbReference type="RefSeq" id="NP_008147.1">
    <property type="nucleotide sequence ID" value="NC_001626.1"/>
</dbReference>
<dbReference type="SMR" id="Q35534"/>
<dbReference type="STRING" id="7757.ENSPMAP00000011430"/>
<dbReference type="Ensembl" id="ENSPMAT00000014105.1">
    <property type="protein sequence ID" value="ENSPMAP00000011430.1"/>
    <property type="gene ID" value="ENSPMAG00000013078.1"/>
</dbReference>
<dbReference type="GeneID" id="807810"/>
<dbReference type="KEGG" id="pmrn:807810"/>
<dbReference type="CTD" id="4519"/>
<dbReference type="GeneTree" id="ENSGT00390000017948"/>
<dbReference type="HOGENOM" id="CLU_031114_3_0_1"/>
<dbReference type="OMA" id="NISAWWN"/>
<dbReference type="OrthoDB" id="244at2759"/>
<dbReference type="Proteomes" id="UP001318040">
    <property type="component" value="Mitochondrion MT"/>
</dbReference>
<dbReference type="GO" id="GO:0005743">
    <property type="term" value="C:mitochondrial inner membrane"/>
    <property type="evidence" value="ECO:0007669"/>
    <property type="project" value="UniProtKB-SubCell"/>
</dbReference>
<dbReference type="GO" id="GO:0045275">
    <property type="term" value="C:respiratory chain complex III"/>
    <property type="evidence" value="ECO:0007669"/>
    <property type="project" value="InterPro"/>
</dbReference>
<dbReference type="GO" id="GO:0046872">
    <property type="term" value="F:metal ion binding"/>
    <property type="evidence" value="ECO:0007669"/>
    <property type="project" value="UniProtKB-KW"/>
</dbReference>
<dbReference type="GO" id="GO:0008121">
    <property type="term" value="F:ubiquinol-cytochrome-c reductase activity"/>
    <property type="evidence" value="ECO:0007669"/>
    <property type="project" value="InterPro"/>
</dbReference>
<dbReference type="GO" id="GO:0006122">
    <property type="term" value="P:mitochondrial electron transport, ubiquinol to cytochrome c"/>
    <property type="evidence" value="ECO:0007669"/>
    <property type="project" value="TreeGrafter"/>
</dbReference>
<dbReference type="CDD" id="cd00290">
    <property type="entry name" value="cytochrome_b_C"/>
    <property type="match status" value="1"/>
</dbReference>
<dbReference type="CDD" id="cd00284">
    <property type="entry name" value="Cytochrome_b_N"/>
    <property type="match status" value="1"/>
</dbReference>
<dbReference type="FunFam" id="1.20.810.10:FF:000002">
    <property type="entry name" value="Cytochrome b"/>
    <property type="match status" value="1"/>
</dbReference>
<dbReference type="Gene3D" id="1.20.810.10">
    <property type="entry name" value="Cytochrome Bc1 Complex, Chain C"/>
    <property type="match status" value="1"/>
</dbReference>
<dbReference type="InterPro" id="IPR005798">
    <property type="entry name" value="Cyt_b/b6_C"/>
</dbReference>
<dbReference type="InterPro" id="IPR036150">
    <property type="entry name" value="Cyt_b/b6_C_sf"/>
</dbReference>
<dbReference type="InterPro" id="IPR005797">
    <property type="entry name" value="Cyt_b/b6_N"/>
</dbReference>
<dbReference type="InterPro" id="IPR027387">
    <property type="entry name" value="Cytb/b6-like_sf"/>
</dbReference>
<dbReference type="InterPro" id="IPR030689">
    <property type="entry name" value="Cytochrome_b"/>
</dbReference>
<dbReference type="InterPro" id="IPR048260">
    <property type="entry name" value="Cytochrome_b_C_euk/bac"/>
</dbReference>
<dbReference type="InterPro" id="IPR048259">
    <property type="entry name" value="Cytochrome_b_N_euk/bac"/>
</dbReference>
<dbReference type="InterPro" id="IPR016174">
    <property type="entry name" value="Di-haem_cyt_TM"/>
</dbReference>
<dbReference type="PANTHER" id="PTHR19271">
    <property type="entry name" value="CYTOCHROME B"/>
    <property type="match status" value="1"/>
</dbReference>
<dbReference type="PANTHER" id="PTHR19271:SF16">
    <property type="entry name" value="CYTOCHROME B"/>
    <property type="match status" value="1"/>
</dbReference>
<dbReference type="Pfam" id="PF00032">
    <property type="entry name" value="Cytochrom_B_C"/>
    <property type="match status" value="1"/>
</dbReference>
<dbReference type="Pfam" id="PF00033">
    <property type="entry name" value="Cytochrome_B"/>
    <property type="match status" value="1"/>
</dbReference>
<dbReference type="PIRSF" id="PIRSF038885">
    <property type="entry name" value="COB"/>
    <property type="match status" value="1"/>
</dbReference>
<dbReference type="SUPFAM" id="SSF81648">
    <property type="entry name" value="a domain/subunit of cytochrome bc1 complex (Ubiquinol-cytochrome c reductase)"/>
    <property type="match status" value="1"/>
</dbReference>
<dbReference type="SUPFAM" id="SSF81342">
    <property type="entry name" value="Transmembrane di-heme cytochromes"/>
    <property type="match status" value="1"/>
</dbReference>
<dbReference type="PROSITE" id="PS51003">
    <property type="entry name" value="CYTB_CTER"/>
    <property type="match status" value="1"/>
</dbReference>
<dbReference type="PROSITE" id="PS51002">
    <property type="entry name" value="CYTB_NTER"/>
    <property type="match status" value="1"/>
</dbReference>
<name>CYB_PETMA</name>
<comment type="function">
    <text evidence="2">Component of the ubiquinol-cytochrome c reductase complex (complex III or cytochrome b-c1 complex) that is part of the mitochondrial respiratory chain. The b-c1 complex mediates electron transfer from ubiquinol to cytochrome c. Contributes to the generation of a proton gradient across the mitochondrial membrane that is then used for ATP synthesis.</text>
</comment>
<comment type="cofactor">
    <cofactor evidence="2">
        <name>heme b</name>
        <dbReference type="ChEBI" id="CHEBI:60344"/>
    </cofactor>
    <text evidence="2">Binds 2 heme b groups non-covalently.</text>
</comment>
<comment type="subunit">
    <text evidence="2">The cytochrome bc1 complex contains 3 respiratory subunits (MT-CYB, CYC1 and UQCRFS1), 2 core proteins (UQCRC1 and UQCRC2) and probably 6 low-molecular weight proteins.</text>
</comment>
<comment type="subcellular location">
    <subcellularLocation>
        <location evidence="2">Mitochondrion inner membrane</location>
        <topology evidence="2">Multi-pass membrane protein</topology>
    </subcellularLocation>
</comment>
<comment type="miscellaneous">
    <text evidence="1">Heme 1 (or BL or b562) is low-potential and absorbs at about 562 nm, and heme 2 (or BH or b566) is high-potential and absorbs at about 566 nm.</text>
</comment>
<comment type="similarity">
    <text evidence="3 4">Belongs to the cytochrome b family.</text>
</comment>
<comment type="caution">
    <text evidence="2">The full-length protein contains only eight transmembrane helices, not nine as predicted by bioinformatics tools.</text>
</comment>
<evidence type="ECO:0000250" key="1"/>
<evidence type="ECO:0000250" key="2">
    <source>
        <dbReference type="UniProtKB" id="P00157"/>
    </source>
</evidence>
<evidence type="ECO:0000255" key="3">
    <source>
        <dbReference type="PROSITE-ProRule" id="PRU00967"/>
    </source>
</evidence>
<evidence type="ECO:0000255" key="4">
    <source>
        <dbReference type="PROSITE-ProRule" id="PRU00968"/>
    </source>
</evidence>
<keyword id="KW-0249">Electron transport</keyword>
<keyword id="KW-0349">Heme</keyword>
<keyword id="KW-0408">Iron</keyword>
<keyword id="KW-0472">Membrane</keyword>
<keyword id="KW-0479">Metal-binding</keyword>
<keyword id="KW-0496">Mitochondrion</keyword>
<keyword id="KW-0999">Mitochondrion inner membrane</keyword>
<keyword id="KW-0679">Respiratory chain</keyword>
<keyword id="KW-0812">Transmembrane</keyword>
<keyword id="KW-1133">Transmembrane helix</keyword>
<keyword id="KW-0813">Transport</keyword>
<keyword id="KW-0830">Ubiquinone</keyword>
<protein>
    <recommendedName>
        <fullName>Cytochrome b</fullName>
    </recommendedName>
    <alternativeName>
        <fullName>Complex III subunit 3</fullName>
    </alternativeName>
    <alternativeName>
        <fullName>Complex III subunit III</fullName>
    </alternativeName>
    <alternativeName>
        <fullName>Cytochrome b-c1 complex subunit 3</fullName>
    </alternativeName>
    <alternativeName>
        <fullName>Ubiquinol-cytochrome-c reductase complex cytochrome b subunit</fullName>
    </alternativeName>
</protein>
<sequence length="396" mass="44551">MSHQPSIIRKTHPLLSLGNSMLVDLPSPANISAWWNFGSLLSLCLILQIITGLILAMHYTANTELAFSSVMHICRDVNNGWLMRNLHANGASMFFICIYAHIGRGIYYGSYLYKETWNVGVILFALTAATAFVGYVLPWGQMSFWGATVITNLISAMPYVGNDIVVWLWGGFSVSNATLTRFFTFHFILPFILAAMTMIHIMFLHQTGSSNPMGINSNLDKIQFHPYFSFKDILGFVILLGILFMISLLAPNALGEPDNFIYANPLSTPPHIKPEWYFLFAYAILRSVPNKLGGVVALAAAIMILLIIPFTHTSKQRGMQFRPLAQITFWILIADLALLTWLGGEPAEYPFILMTQIASTVYFMIFILVFPILGYLENKMLLMSKNTGKFNWKLVY</sequence>